<feature type="chain" id="PRO_0000220266" description="Uncharacterized N-acetyltransferase SCO2625">
    <location>
        <begin position="1"/>
        <end position="413"/>
    </location>
</feature>
<feature type="domain" description="N-acetyltransferase" evidence="1">
    <location>
        <begin position="3"/>
        <end position="155"/>
    </location>
</feature>
<feature type="active site" description="Proton donor" evidence="1">
    <location>
        <position position="127"/>
    </location>
</feature>
<feature type="active site" description="Proton acceptor; via carboxylate" evidence="1">
    <location>
        <position position="413"/>
    </location>
</feature>
<feature type="binding site" evidence="1">
    <location>
        <begin position="86"/>
        <end position="88"/>
    </location>
    <ligand>
        <name>acetyl-CoA</name>
        <dbReference type="ChEBI" id="CHEBI:57288"/>
    </ligand>
</feature>
<feature type="binding site" evidence="1">
    <location>
        <begin position="94"/>
        <end position="99"/>
    </location>
    <ligand>
        <name>acetyl-CoA</name>
        <dbReference type="ChEBI" id="CHEBI:57288"/>
    </ligand>
</feature>
<feature type="binding site" evidence="1">
    <location>
        <begin position="122"/>
        <end position="123"/>
    </location>
    <ligand>
        <name>acetyl-CoA</name>
        <dbReference type="ChEBI" id="CHEBI:57288"/>
    </ligand>
</feature>
<evidence type="ECO:0000255" key="1">
    <source>
        <dbReference type="HAMAP-Rule" id="MF_01812"/>
    </source>
</evidence>
<keyword id="KW-0012">Acyltransferase</keyword>
<keyword id="KW-1185">Reference proteome</keyword>
<keyword id="KW-0808">Transferase</keyword>
<organism>
    <name type="scientific">Streptomyces coelicolor (strain ATCC BAA-471 / A3(2) / M145)</name>
    <dbReference type="NCBI Taxonomy" id="100226"/>
    <lineage>
        <taxon>Bacteria</taxon>
        <taxon>Bacillati</taxon>
        <taxon>Actinomycetota</taxon>
        <taxon>Actinomycetes</taxon>
        <taxon>Kitasatosporales</taxon>
        <taxon>Streptomycetaceae</taxon>
        <taxon>Streptomyces</taxon>
        <taxon>Streptomyces albidoflavus group</taxon>
    </lineage>
</organism>
<gene>
    <name type="ordered locus">SCO2625</name>
    <name type="ORF">SCC80.10</name>
</gene>
<dbReference type="EC" id="2.3.1.-" evidence="1"/>
<dbReference type="EMBL" id="AL939113">
    <property type="protein sequence ID" value="CAC10001.1"/>
    <property type="molecule type" value="Genomic_DNA"/>
</dbReference>
<dbReference type="RefSeq" id="NP_626861.1">
    <property type="nucleotide sequence ID" value="NC_003888.3"/>
</dbReference>
<dbReference type="RefSeq" id="WP_011028461.1">
    <property type="nucleotide sequence ID" value="NZ_VNID01000001.1"/>
</dbReference>
<dbReference type="SMR" id="Q9F309"/>
<dbReference type="STRING" id="100226.gene:17760231"/>
<dbReference type="PaxDb" id="100226-SCO2625"/>
<dbReference type="KEGG" id="sco:SCO2625"/>
<dbReference type="PATRIC" id="fig|100226.15.peg.2671"/>
<dbReference type="eggNOG" id="COG4552">
    <property type="taxonomic scope" value="Bacteria"/>
</dbReference>
<dbReference type="HOGENOM" id="CLU_050659_0_0_11"/>
<dbReference type="InParanoid" id="Q9F309"/>
<dbReference type="OrthoDB" id="8399956at2"/>
<dbReference type="PhylomeDB" id="Q9F309"/>
<dbReference type="Proteomes" id="UP000001973">
    <property type="component" value="Chromosome"/>
</dbReference>
<dbReference type="GO" id="GO:0034069">
    <property type="term" value="F:aminoglycoside N-acetyltransferase activity"/>
    <property type="evidence" value="ECO:0000318"/>
    <property type="project" value="GO_Central"/>
</dbReference>
<dbReference type="GO" id="GO:0030649">
    <property type="term" value="P:aminoglycoside antibiotic catabolic process"/>
    <property type="evidence" value="ECO:0000318"/>
    <property type="project" value="GO_Central"/>
</dbReference>
<dbReference type="FunFam" id="3.30.1050.10:FF:000008">
    <property type="entry name" value="N-acetyltransferase Eis"/>
    <property type="match status" value="1"/>
</dbReference>
<dbReference type="FunFam" id="3.40.630.30:FF:000112">
    <property type="entry name" value="N-acetyltransferase Eis"/>
    <property type="match status" value="1"/>
</dbReference>
<dbReference type="FunFam" id="3.40.630.30:FF:000158">
    <property type="entry name" value="Uncharacterized N-acetyltransferase B9W62_25615"/>
    <property type="match status" value="1"/>
</dbReference>
<dbReference type="Gene3D" id="3.40.630.30">
    <property type="match status" value="2"/>
</dbReference>
<dbReference type="Gene3D" id="3.30.1050.10">
    <property type="entry name" value="SCP2 sterol-binding domain"/>
    <property type="match status" value="1"/>
</dbReference>
<dbReference type="HAMAP" id="MF_01812">
    <property type="entry name" value="Eis"/>
    <property type="match status" value="1"/>
</dbReference>
<dbReference type="InterPro" id="IPR041380">
    <property type="entry name" value="Acetyltransf_17"/>
</dbReference>
<dbReference type="InterPro" id="IPR051554">
    <property type="entry name" value="Acetyltransferase_Eis"/>
</dbReference>
<dbReference type="InterPro" id="IPR016181">
    <property type="entry name" value="Acyl_CoA_acyltransferase"/>
</dbReference>
<dbReference type="InterPro" id="IPR025559">
    <property type="entry name" value="Eis_dom"/>
</dbReference>
<dbReference type="InterPro" id="IPR000182">
    <property type="entry name" value="GNAT_dom"/>
</dbReference>
<dbReference type="InterPro" id="IPR022902">
    <property type="entry name" value="NAcTrfase_Eis"/>
</dbReference>
<dbReference type="InterPro" id="IPR036527">
    <property type="entry name" value="SCP2_sterol-bd_dom_sf"/>
</dbReference>
<dbReference type="NCBIfam" id="NF002367">
    <property type="entry name" value="PRK01346.1-4"/>
    <property type="match status" value="1"/>
</dbReference>
<dbReference type="PANTHER" id="PTHR37817">
    <property type="entry name" value="N-ACETYLTRANSFERASE EIS"/>
    <property type="match status" value="1"/>
</dbReference>
<dbReference type="PANTHER" id="PTHR37817:SF1">
    <property type="entry name" value="N-ACETYLTRANSFERASE EIS"/>
    <property type="match status" value="1"/>
</dbReference>
<dbReference type="Pfam" id="PF17668">
    <property type="entry name" value="Acetyltransf_17"/>
    <property type="match status" value="1"/>
</dbReference>
<dbReference type="Pfam" id="PF13527">
    <property type="entry name" value="Acetyltransf_9"/>
    <property type="match status" value="1"/>
</dbReference>
<dbReference type="Pfam" id="PF13530">
    <property type="entry name" value="SCP2_2"/>
    <property type="match status" value="1"/>
</dbReference>
<dbReference type="SUPFAM" id="SSF55729">
    <property type="entry name" value="Acyl-CoA N-acyltransferases (Nat)"/>
    <property type="match status" value="1"/>
</dbReference>
<dbReference type="SUPFAM" id="SSF55718">
    <property type="entry name" value="SCP-like"/>
    <property type="match status" value="1"/>
</dbReference>
<dbReference type="PROSITE" id="PS51186">
    <property type="entry name" value="GNAT"/>
    <property type="match status" value="1"/>
</dbReference>
<protein>
    <recommendedName>
        <fullName evidence="1">Uncharacterized N-acetyltransferase SCO2625</fullName>
        <ecNumber evidence="1">2.3.1.-</ecNumber>
    </recommendedName>
</protein>
<reference key="1">
    <citation type="journal article" date="2002" name="Nature">
        <title>Complete genome sequence of the model actinomycete Streptomyces coelicolor A3(2).</title>
        <authorList>
            <person name="Bentley S.D."/>
            <person name="Chater K.F."/>
            <person name="Cerdeno-Tarraga A.-M."/>
            <person name="Challis G.L."/>
            <person name="Thomson N.R."/>
            <person name="James K.D."/>
            <person name="Harris D.E."/>
            <person name="Quail M.A."/>
            <person name="Kieser H."/>
            <person name="Harper D."/>
            <person name="Bateman A."/>
            <person name="Brown S."/>
            <person name="Chandra G."/>
            <person name="Chen C.W."/>
            <person name="Collins M."/>
            <person name="Cronin A."/>
            <person name="Fraser A."/>
            <person name="Goble A."/>
            <person name="Hidalgo J."/>
            <person name="Hornsby T."/>
            <person name="Howarth S."/>
            <person name="Huang C.-H."/>
            <person name="Kieser T."/>
            <person name="Larke L."/>
            <person name="Murphy L.D."/>
            <person name="Oliver K."/>
            <person name="O'Neil S."/>
            <person name="Rabbinowitsch E."/>
            <person name="Rajandream M.A."/>
            <person name="Rutherford K.M."/>
            <person name="Rutter S."/>
            <person name="Seeger K."/>
            <person name="Saunders D."/>
            <person name="Sharp S."/>
            <person name="Squares R."/>
            <person name="Squares S."/>
            <person name="Taylor K."/>
            <person name="Warren T."/>
            <person name="Wietzorrek A."/>
            <person name="Woodward J.R."/>
            <person name="Barrell B.G."/>
            <person name="Parkhill J."/>
            <person name="Hopwood D.A."/>
        </authorList>
    </citation>
    <scope>NUCLEOTIDE SEQUENCE [LARGE SCALE GENOMIC DNA]</scope>
    <source>
        <strain>ATCC BAA-471 / A3(2) / M145</strain>
    </source>
</reference>
<comment type="subunit">
    <text evidence="1">Homohexamer; trimer of dimers.</text>
</comment>
<comment type="similarity">
    <text>Belongs to the acetyltransferase Eis family.</text>
</comment>
<accession>Q9F309</accession>
<sequence length="413" mass="44719">MTMEPRVLRREEWDSWYGSLIRAFGGVPEPAEELELFRELTRVDRSIGVWERDGEAEACVGTTGSFDFRMTVPGGAQVRAAGVTMVSVAATHRRRGVLTSMMRRQLDDVRAWGEPLAVLTASEPAIYGRFGYGAATFSLSAEIDTSRVRLSVPAGTDDVRLRYAAPADVLDACEAVYARLVPGRPGMLARRPGWERLALLDPESGRDGASPLQCVVARRGGEVTGFARFRVRPAWGPEGAGGTVVLDDLAGLDPATEAALWRFLYDVDLTSRLAVRGRPVDEAWQYQVSDIRRCRPESRDALYVRLVDVGAALAARTYQAPVDVVFEVEDAFCPWNAGRWRLSGDAKGASCERTSDGADLALSVRELGAAYLGGVRLSSLGAAGRVREVRAGALAEASVGFGSDVAPWLPHGF</sequence>
<proteinExistence type="inferred from homology"/>
<name>Y2625_STRCO</name>